<name>EPO_BOVIN</name>
<proteinExistence type="evidence at transcript level"/>
<accession>P48617</accession>
<accession>A3FFT0</accession>
<dbReference type="EMBL" id="L41354">
    <property type="protein sequence ID" value="AAB41268.1"/>
    <property type="molecule type" value="mRNA"/>
</dbReference>
<dbReference type="EMBL" id="U44762">
    <property type="protein sequence ID" value="AAA86653.1"/>
    <property type="molecule type" value="mRNA"/>
</dbReference>
<dbReference type="EMBL" id="EF374049">
    <property type="protein sequence ID" value="ABN48309.1"/>
    <property type="molecule type" value="Genomic_DNA"/>
</dbReference>
<dbReference type="RefSeq" id="NP_776334.1">
    <property type="nucleotide sequence ID" value="NM_173909.2"/>
</dbReference>
<dbReference type="SMR" id="P48617"/>
<dbReference type="FunCoup" id="P48617">
    <property type="interactions" value="132"/>
</dbReference>
<dbReference type="STRING" id="9913.ENSBTAP00000072843"/>
<dbReference type="GlyCosmos" id="P48617">
    <property type="glycosylation" value="3 sites, No reported glycans"/>
</dbReference>
<dbReference type="GlyGen" id="P48617">
    <property type="glycosylation" value="3 sites"/>
</dbReference>
<dbReference type="PaxDb" id="9913-ENSBTAP00000004450"/>
<dbReference type="Ensembl" id="ENSBTAT00000004450.5">
    <property type="protein sequence ID" value="ENSBTAP00000004450.5"/>
    <property type="gene ID" value="ENSBTAG00000003430.5"/>
</dbReference>
<dbReference type="GeneID" id="280784"/>
<dbReference type="KEGG" id="biu:109578290"/>
<dbReference type="KEGG" id="bta:280784"/>
<dbReference type="CTD" id="2056"/>
<dbReference type="VEuPathDB" id="HostDB:ENSBTAG00000003430"/>
<dbReference type="VGNC" id="VGNC:28549">
    <property type="gene designation" value="EPO"/>
</dbReference>
<dbReference type="eggNOG" id="ENOG502RXRC">
    <property type="taxonomic scope" value="Eukaryota"/>
</dbReference>
<dbReference type="GeneTree" id="ENSGT00390000017226"/>
<dbReference type="HOGENOM" id="CLU_110946_0_0_1"/>
<dbReference type="InParanoid" id="P48617"/>
<dbReference type="OMA" id="AMEFPRL"/>
<dbReference type="OrthoDB" id="9892121at2759"/>
<dbReference type="TreeFam" id="TF333413"/>
<dbReference type="Reactome" id="R-BTA-9027276">
    <property type="pathway name" value="Erythropoietin activates Phosphoinositide-3-kinase (PI3K)"/>
</dbReference>
<dbReference type="Reactome" id="R-BTA-9027284">
    <property type="pathway name" value="Erythropoietin activates RAS"/>
</dbReference>
<dbReference type="Proteomes" id="UP000009136">
    <property type="component" value="Chromosome 25"/>
</dbReference>
<dbReference type="Bgee" id="ENSBTAG00000003430">
    <property type="expression patterns" value="Expressed in cumulus cell and 11 other cell types or tissues"/>
</dbReference>
<dbReference type="GO" id="GO:0009986">
    <property type="term" value="C:cell surface"/>
    <property type="evidence" value="ECO:0007669"/>
    <property type="project" value="Ensembl"/>
</dbReference>
<dbReference type="GO" id="GO:0005615">
    <property type="term" value="C:extracellular space"/>
    <property type="evidence" value="ECO:0000318"/>
    <property type="project" value="GO_Central"/>
</dbReference>
<dbReference type="GO" id="GO:0005125">
    <property type="term" value="F:cytokine activity"/>
    <property type="evidence" value="ECO:0000318"/>
    <property type="project" value="GO_Central"/>
</dbReference>
<dbReference type="GO" id="GO:0005128">
    <property type="term" value="F:erythropoietin receptor binding"/>
    <property type="evidence" value="ECO:0000250"/>
    <property type="project" value="UniProtKB"/>
</dbReference>
<dbReference type="GO" id="GO:0005179">
    <property type="term" value="F:hormone activity"/>
    <property type="evidence" value="ECO:0007669"/>
    <property type="project" value="UniProtKB-KW"/>
</dbReference>
<dbReference type="GO" id="GO:0030295">
    <property type="term" value="F:protein kinase activator activity"/>
    <property type="evidence" value="ECO:0000318"/>
    <property type="project" value="GO_Central"/>
</dbReference>
<dbReference type="GO" id="GO:0097696">
    <property type="term" value="P:cell surface receptor signaling pathway via STAT"/>
    <property type="evidence" value="ECO:0007669"/>
    <property type="project" value="Ensembl"/>
</dbReference>
<dbReference type="GO" id="GO:0071474">
    <property type="term" value="P:cellular hyperosmotic response"/>
    <property type="evidence" value="ECO:0007669"/>
    <property type="project" value="Ensembl"/>
</dbReference>
<dbReference type="GO" id="GO:0007566">
    <property type="term" value="P:embryo implantation"/>
    <property type="evidence" value="ECO:0007669"/>
    <property type="project" value="Ensembl"/>
</dbReference>
<dbReference type="GO" id="GO:0030218">
    <property type="term" value="P:erythrocyte differentiation"/>
    <property type="evidence" value="ECO:0000250"/>
    <property type="project" value="UniProtKB"/>
</dbReference>
<dbReference type="GO" id="GO:0043249">
    <property type="term" value="P:erythrocyte maturation"/>
    <property type="evidence" value="ECO:0007669"/>
    <property type="project" value="UniProtKB-KW"/>
</dbReference>
<dbReference type="GO" id="GO:0038162">
    <property type="term" value="P:erythropoietin-mediated signaling pathway"/>
    <property type="evidence" value="ECO:0000250"/>
    <property type="project" value="UniProtKB"/>
</dbReference>
<dbReference type="GO" id="GO:0042541">
    <property type="term" value="P:hemoglobin biosynthetic process"/>
    <property type="evidence" value="ECO:0007669"/>
    <property type="project" value="Ensembl"/>
</dbReference>
<dbReference type="GO" id="GO:0033028">
    <property type="term" value="P:myeloid cell apoptotic process"/>
    <property type="evidence" value="ECO:0007669"/>
    <property type="project" value="Ensembl"/>
</dbReference>
<dbReference type="GO" id="GO:0010523">
    <property type="term" value="P:negative regulation of calcium ion transport into cytosol"/>
    <property type="evidence" value="ECO:0007669"/>
    <property type="project" value="Ensembl"/>
</dbReference>
<dbReference type="GO" id="GO:1902251">
    <property type="term" value="P:negative regulation of erythrocyte apoptotic process"/>
    <property type="evidence" value="ECO:0007669"/>
    <property type="project" value="Ensembl"/>
</dbReference>
<dbReference type="GO" id="GO:1902219">
    <property type="term" value="P:negative regulation of intrinsic apoptotic signaling pathway in response to osmotic stress"/>
    <property type="evidence" value="ECO:0007669"/>
    <property type="project" value="Ensembl"/>
</dbReference>
<dbReference type="GO" id="GO:0000122">
    <property type="term" value="P:negative regulation of transcription by RNA polymerase II"/>
    <property type="evidence" value="ECO:0007669"/>
    <property type="project" value="Ensembl"/>
</dbReference>
<dbReference type="GO" id="GO:0008284">
    <property type="term" value="P:positive regulation of cell population proliferation"/>
    <property type="evidence" value="ECO:0000318"/>
    <property type="project" value="GO_Central"/>
</dbReference>
<dbReference type="GO" id="GO:0045893">
    <property type="term" value="P:positive regulation of DNA-templated transcription"/>
    <property type="evidence" value="ECO:0007669"/>
    <property type="project" value="Ensembl"/>
</dbReference>
<dbReference type="GO" id="GO:0046579">
    <property type="term" value="P:positive regulation of Ras protein signal transduction"/>
    <property type="evidence" value="ECO:0000318"/>
    <property type="project" value="GO_Central"/>
</dbReference>
<dbReference type="GO" id="GO:0001666">
    <property type="term" value="P:response to hypoxia"/>
    <property type="evidence" value="ECO:0007669"/>
    <property type="project" value="Ensembl"/>
</dbReference>
<dbReference type="FunFam" id="1.20.1250.10:FF:000013">
    <property type="entry name" value="Erythropoietin"/>
    <property type="match status" value="1"/>
</dbReference>
<dbReference type="Gene3D" id="1.20.1250.10">
    <property type="match status" value="1"/>
</dbReference>
<dbReference type="InterPro" id="IPR009079">
    <property type="entry name" value="4_helix_cytokine-like_core"/>
</dbReference>
<dbReference type="InterPro" id="IPR019767">
    <property type="entry name" value="EPO/TPO_CS"/>
</dbReference>
<dbReference type="InterPro" id="IPR001323">
    <property type="entry name" value="EPO_TPO"/>
</dbReference>
<dbReference type="InterPro" id="IPR003013">
    <property type="entry name" value="Erythroptn"/>
</dbReference>
<dbReference type="PANTHER" id="PTHR10370">
    <property type="entry name" value="ERYTHROPOIETIN"/>
    <property type="match status" value="1"/>
</dbReference>
<dbReference type="PANTHER" id="PTHR10370:SF0">
    <property type="entry name" value="ERYTHROPOIETIN"/>
    <property type="match status" value="1"/>
</dbReference>
<dbReference type="Pfam" id="PF00758">
    <property type="entry name" value="EPO_TPO"/>
    <property type="match status" value="1"/>
</dbReference>
<dbReference type="PIRSF" id="PIRSF001951">
    <property type="entry name" value="EPO"/>
    <property type="match status" value="1"/>
</dbReference>
<dbReference type="PRINTS" id="PR00272">
    <property type="entry name" value="ERYTHROPTN"/>
</dbReference>
<dbReference type="SUPFAM" id="SSF47266">
    <property type="entry name" value="4-helical cytokines"/>
    <property type="match status" value="1"/>
</dbReference>
<dbReference type="PROSITE" id="PS00817">
    <property type="entry name" value="EPO_TPO"/>
    <property type="match status" value="1"/>
</dbReference>
<feature type="signal peptide" evidence="3">
    <location>
        <begin position="1"/>
        <end position="25"/>
    </location>
</feature>
<feature type="chain" id="PRO_0000008397" description="Erythropoietin">
    <location>
        <begin position="26"/>
        <end position="192"/>
    </location>
</feature>
<feature type="glycosylation site" description="N-linked (GlcNAc...) asparagine" evidence="3">
    <location>
        <position position="49"/>
    </location>
</feature>
<feature type="glycosylation site" description="N-linked (GlcNAc...) asparagine" evidence="3">
    <location>
        <position position="63"/>
    </location>
</feature>
<feature type="glycosylation site" description="N-linked (GlcNAc...) asparagine" evidence="3">
    <location>
        <position position="108"/>
    </location>
</feature>
<feature type="disulfide bond" evidence="1">
    <location>
        <begin position="32"/>
        <end position="187"/>
    </location>
</feature>
<feature type="disulfide bond" evidence="1">
    <location>
        <begin position="54"/>
        <end position="58"/>
    </location>
</feature>
<comment type="function">
    <text evidence="2">Hormone involved in the regulation of erythrocyte proliferation and differentiation and the maintenance of a physiological level of circulating erythrocyte mass. Binds to EPOR leading to EPOR dimerization and JAK2 activation thereby activating specific downstream effectors, including STAT1 and STAT3.</text>
</comment>
<comment type="subcellular location">
    <subcellularLocation>
        <location>Secreted</location>
    </subcellularLocation>
</comment>
<comment type="tissue specificity">
    <text>Produced by kidney or liver of adult mammals and by liver of fetal or neonatal mammals.</text>
</comment>
<comment type="similarity">
    <text evidence="4">Belongs to the EPO/TPO family.</text>
</comment>
<organism>
    <name type="scientific">Bos taurus</name>
    <name type="common">Bovine</name>
    <dbReference type="NCBI Taxonomy" id="9913"/>
    <lineage>
        <taxon>Eukaryota</taxon>
        <taxon>Metazoa</taxon>
        <taxon>Chordata</taxon>
        <taxon>Craniata</taxon>
        <taxon>Vertebrata</taxon>
        <taxon>Euteleostomi</taxon>
        <taxon>Mammalia</taxon>
        <taxon>Eutheria</taxon>
        <taxon>Laurasiatheria</taxon>
        <taxon>Artiodactyla</taxon>
        <taxon>Ruminantia</taxon>
        <taxon>Pecora</taxon>
        <taxon>Bovidae</taxon>
        <taxon>Bovinae</taxon>
        <taxon>Bos</taxon>
    </lineage>
</organism>
<evidence type="ECO:0000250" key="1"/>
<evidence type="ECO:0000250" key="2">
    <source>
        <dbReference type="UniProtKB" id="P01588"/>
    </source>
</evidence>
<evidence type="ECO:0000255" key="3"/>
<evidence type="ECO:0000305" key="4"/>
<gene>
    <name type="primary">EPO</name>
</gene>
<protein>
    <recommendedName>
        <fullName>Erythropoietin</fullName>
    </recommendedName>
</protein>
<reference key="1">
    <citation type="journal article" date="1996" name="Gene">
        <title>Cloning of a cDNA encoding bovine erythropoietin and analysis of its transcription in selected tissues.</title>
        <authorList>
            <person name="Suliman H.B."/>
            <person name="Majiwa P.A.O."/>
            <person name="Feldman B.F."/>
            <person name="Mertens B."/>
            <person name="Logan-Henfrey L.L."/>
        </authorList>
    </citation>
    <scope>NUCLEOTIDE SEQUENCE [MRNA]</scope>
    <source>
        <strain>Boran</strain>
        <tissue>Kidney</tissue>
    </source>
</reference>
<reference key="2">
    <citation type="submission" date="2007-01" db="EMBL/GenBank/DDBJ databases">
        <title>Cloning and sequence analysis on erythropoietin (EPO) gene of Bos taurus (San Jiang yellow cattle).</title>
        <authorList>
            <person name="Jin S."/>
            <person name="Zhong J.C."/>
            <person name="Chen Z.H."/>
            <person name="Ma Z.J."/>
        </authorList>
    </citation>
    <scope>NUCLEOTIDE SEQUENCE [GENOMIC DNA]</scope>
</reference>
<sequence length="192" mass="21076">MGARDCTPLLMLSFLLFPLGFPVLGAPARLICDSRVLERYILEAREAENATMGCAEGCSFNENITVPDTKVNFYAWKRMEVQQQALEVWQGLALLSEAILRGQALLANASQPCEALRLHVDKAVSGLRSLTSLLRALGAQKEAISLPDATPSAAPLRAFTVDALSKLFRIYSNFLRGKLTLYTGEACRRGDR</sequence>
<keyword id="KW-1015">Disulfide bond</keyword>
<keyword id="KW-0265">Erythrocyte maturation</keyword>
<keyword id="KW-0325">Glycoprotein</keyword>
<keyword id="KW-0372">Hormone</keyword>
<keyword id="KW-1185">Reference proteome</keyword>
<keyword id="KW-0964">Secreted</keyword>
<keyword id="KW-0732">Signal</keyword>